<reference key="1">
    <citation type="journal article" date="2004" name="Mol. Phylogenet. Evol.">
        <title>Phylogenetic relationships in Nicotiana (Solanaceae) inferred from multiple plastid regions.</title>
        <authorList>
            <person name="Clarkson J.J."/>
            <person name="Knapp S."/>
            <person name="Garcia V.F."/>
            <person name="Olmstead R.G."/>
            <person name="Leitch A.R."/>
            <person name="Chase M.W."/>
        </authorList>
    </citation>
    <scope>NUCLEOTIDE SEQUENCE [GENOMIC DNA]</scope>
</reference>
<sequence length="511" mass="60252">MEEIQRYLQPDSSSSQQHNFLYPLIFQEYIYALAHDHGLNRNRSILLENPGYNNKFSFLIVKRLITRMYQQNHFRISTNDSNKNPFLGCNKSLYSQMISEGFAFIVEIPFSLRLISSLSSFEGKKIFKSHNLRSIHSTFPFLEDNFAHLNYVLDILIPYPVHLEILVQTLRYWVKDASSLHLLRFFLHEYWNLNSLITSKKPGYSFSKTNQRFFFFLYNSYVYESESTFVFLRNQSSHLRSTSFGALLERIYFYGKIERLVEVFAKDFQVTLWLFKDPFMHYVRYQGKSILASKGTFLLMNKWKFYLVNFWQCNFSLCFPTGRIHINQLSNHSRDFMGYLSSVRLNPSMVRSQMLENAFLINNGIKKFDTLVPIIPLIGSLAKANFCTVLGHPISKPVWSDLSDSDIIDRFGRICRNLFHYYSGSSKKKTLYRIKYILRLSCARTLARKHKSTVRTFLKRSGSELLEEFLTSEEQVLSLTFPRASSSLWGVYRSRIWYLDIFCINDLANYQ</sequence>
<accession>Q70D04</accession>
<dbReference type="EMBL" id="AJ585883">
    <property type="protein sequence ID" value="CAE51524.1"/>
    <property type="molecule type" value="Genomic_DNA"/>
</dbReference>
<dbReference type="GO" id="GO:0009507">
    <property type="term" value="C:chloroplast"/>
    <property type="evidence" value="ECO:0007669"/>
    <property type="project" value="UniProtKB-SubCell"/>
</dbReference>
<dbReference type="GO" id="GO:0003723">
    <property type="term" value="F:RNA binding"/>
    <property type="evidence" value="ECO:0007669"/>
    <property type="project" value="UniProtKB-KW"/>
</dbReference>
<dbReference type="GO" id="GO:0006397">
    <property type="term" value="P:mRNA processing"/>
    <property type="evidence" value="ECO:0007669"/>
    <property type="project" value="UniProtKB-KW"/>
</dbReference>
<dbReference type="GO" id="GO:0008380">
    <property type="term" value="P:RNA splicing"/>
    <property type="evidence" value="ECO:0007669"/>
    <property type="project" value="UniProtKB-UniRule"/>
</dbReference>
<dbReference type="GO" id="GO:0008033">
    <property type="term" value="P:tRNA processing"/>
    <property type="evidence" value="ECO:0007669"/>
    <property type="project" value="UniProtKB-KW"/>
</dbReference>
<dbReference type="HAMAP" id="MF_01390">
    <property type="entry name" value="MatK"/>
    <property type="match status" value="1"/>
</dbReference>
<dbReference type="InterPro" id="IPR024937">
    <property type="entry name" value="Domain_X"/>
</dbReference>
<dbReference type="InterPro" id="IPR002866">
    <property type="entry name" value="Maturase_MatK"/>
</dbReference>
<dbReference type="InterPro" id="IPR024942">
    <property type="entry name" value="Maturase_MatK_N"/>
</dbReference>
<dbReference type="PANTHER" id="PTHR34811">
    <property type="entry name" value="MATURASE K"/>
    <property type="match status" value="1"/>
</dbReference>
<dbReference type="PANTHER" id="PTHR34811:SF1">
    <property type="entry name" value="MATURASE K"/>
    <property type="match status" value="1"/>
</dbReference>
<dbReference type="Pfam" id="PF01348">
    <property type="entry name" value="Intron_maturas2"/>
    <property type="match status" value="1"/>
</dbReference>
<dbReference type="Pfam" id="PF01824">
    <property type="entry name" value="MatK_N"/>
    <property type="match status" value="1"/>
</dbReference>
<name>MATK_MANOF</name>
<comment type="function">
    <text evidence="1">Usually encoded in the trnK tRNA gene intron. Probably assists in splicing its own and other chloroplast group II introns.</text>
</comment>
<comment type="subcellular location">
    <subcellularLocation>
        <location>Plastid</location>
        <location>Chloroplast</location>
    </subcellularLocation>
</comment>
<comment type="similarity">
    <text evidence="1">Belongs to the intron maturase 2 family. MatK subfamily.</text>
</comment>
<protein>
    <recommendedName>
        <fullName evidence="1">Maturase K</fullName>
    </recommendedName>
    <alternativeName>
        <fullName evidence="1">Intron maturase</fullName>
    </alternativeName>
</protein>
<proteinExistence type="inferred from homology"/>
<geneLocation type="chloroplast"/>
<evidence type="ECO:0000255" key="1">
    <source>
        <dbReference type="HAMAP-Rule" id="MF_01390"/>
    </source>
</evidence>
<keyword id="KW-0150">Chloroplast</keyword>
<keyword id="KW-0507">mRNA processing</keyword>
<keyword id="KW-0934">Plastid</keyword>
<keyword id="KW-0694">RNA-binding</keyword>
<keyword id="KW-0819">tRNA processing</keyword>
<feature type="chain" id="PRO_0000143505" description="Maturase K">
    <location>
        <begin position="1"/>
        <end position="511"/>
    </location>
</feature>
<gene>
    <name evidence="1" type="primary">matK</name>
</gene>
<organism>
    <name type="scientific">Mandragora officinarum</name>
    <name type="common">Mandrake</name>
    <dbReference type="NCBI Taxonomy" id="33117"/>
    <lineage>
        <taxon>Eukaryota</taxon>
        <taxon>Viridiplantae</taxon>
        <taxon>Streptophyta</taxon>
        <taxon>Embryophyta</taxon>
        <taxon>Tracheophyta</taxon>
        <taxon>Spermatophyta</taxon>
        <taxon>Magnoliopsida</taxon>
        <taxon>eudicotyledons</taxon>
        <taxon>Gunneridae</taxon>
        <taxon>Pentapetalae</taxon>
        <taxon>asterids</taxon>
        <taxon>lamiids</taxon>
        <taxon>Solanales</taxon>
        <taxon>Solanaceae</taxon>
        <taxon>Solanoideae</taxon>
        <taxon>Mandragoreae</taxon>
        <taxon>Mandragora</taxon>
    </lineage>
</organism>